<organism>
    <name type="scientific">Musicola paradisiaca (strain Ech703)</name>
    <name type="common">Dickeya paradisiaca</name>
    <name type="synonym">Dickeya dadantii</name>
    <dbReference type="NCBI Taxonomy" id="579405"/>
    <lineage>
        <taxon>Bacteria</taxon>
        <taxon>Pseudomonadati</taxon>
        <taxon>Pseudomonadota</taxon>
        <taxon>Gammaproteobacteria</taxon>
        <taxon>Enterobacterales</taxon>
        <taxon>Pectobacteriaceae</taxon>
        <taxon>Musicola</taxon>
    </lineage>
</organism>
<proteinExistence type="inferred from homology"/>
<dbReference type="EC" id="2.1.1.186" evidence="1"/>
<dbReference type="EMBL" id="CP001654">
    <property type="protein sequence ID" value="ACS86767.1"/>
    <property type="molecule type" value="Genomic_DNA"/>
</dbReference>
<dbReference type="RefSeq" id="WP_015854668.1">
    <property type="nucleotide sequence ID" value="NC_012880.1"/>
</dbReference>
<dbReference type="SMR" id="C6CC07"/>
<dbReference type="STRING" id="579405.Dd703_2992"/>
<dbReference type="KEGG" id="dda:Dd703_2992"/>
<dbReference type="eggNOG" id="COG2933">
    <property type="taxonomic scope" value="Bacteria"/>
</dbReference>
<dbReference type="HOGENOM" id="CLU_043780_0_0_6"/>
<dbReference type="Proteomes" id="UP000002734">
    <property type="component" value="Chromosome"/>
</dbReference>
<dbReference type="GO" id="GO:0005737">
    <property type="term" value="C:cytoplasm"/>
    <property type="evidence" value="ECO:0007669"/>
    <property type="project" value="UniProtKB-SubCell"/>
</dbReference>
<dbReference type="GO" id="GO:0008757">
    <property type="term" value="F:S-adenosylmethionine-dependent methyltransferase activity"/>
    <property type="evidence" value="ECO:0007669"/>
    <property type="project" value="UniProtKB-UniRule"/>
</dbReference>
<dbReference type="GO" id="GO:0032259">
    <property type="term" value="P:methylation"/>
    <property type="evidence" value="ECO:0007669"/>
    <property type="project" value="UniProtKB-KW"/>
</dbReference>
<dbReference type="GO" id="GO:0006364">
    <property type="term" value="P:rRNA processing"/>
    <property type="evidence" value="ECO:0007669"/>
    <property type="project" value="UniProtKB-UniRule"/>
</dbReference>
<dbReference type="Gene3D" id="3.30.2300.20">
    <property type="match status" value="1"/>
</dbReference>
<dbReference type="Gene3D" id="3.30.70.2810">
    <property type="match status" value="1"/>
</dbReference>
<dbReference type="Gene3D" id="3.40.50.150">
    <property type="entry name" value="Vaccinia Virus protein VP39"/>
    <property type="match status" value="1"/>
</dbReference>
<dbReference type="HAMAP" id="MF_01551">
    <property type="entry name" value="23SrRNA_methyltr_M"/>
    <property type="match status" value="1"/>
</dbReference>
<dbReference type="InterPro" id="IPR040739">
    <property type="entry name" value="RlmM_FDX"/>
</dbReference>
<dbReference type="InterPro" id="IPR048646">
    <property type="entry name" value="RlmM_THUMP-like"/>
</dbReference>
<dbReference type="InterPro" id="IPR002877">
    <property type="entry name" value="RNA_MeTrfase_FtsJ_dom"/>
</dbReference>
<dbReference type="InterPro" id="IPR011224">
    <property type="entry name" value="rRNA_MeTrfase_M"/>
</dbReference>
<dbReference type="InterPro" id="IPR029063">
    <property type="entry name" value="SAM-dependent_MTases_sf"/>
</dbReference>
<dbReference type="NCBIfam" id="NF008734">
    <property type="entry name" value="PRK11760.1"/>
    <property type="match status" value="1"/>
</dbReference>
<dbReference type="PANTHER" id="PTHR37524">
    <property type="entry name" value="RIBOSOMAL RNA LARGE SUBUNIT METHYLTRANSFERASE M"/>
    <property type="match status" value="1"/>
</dbReference>
<dbReference type="PANTHER" id="PTHR37524:SF2">
    <property type="entry name" value="RIBOSOMAL RNA METHYLTRANSFERASE FTSJ DOMAIN-CONTAINING PROTEIN"/>
    <property type="match status" value="1"/>
</dbReference>
<dbReference type="Pfam" id="PF01728">
    <property type="entry name" value="FtsJ"/>
    <property type="match status" value="1"/>
</dbReference>
<dbReference type="Pfam" id="PF18125">
    <property type="entry name" value="RlmM_FDX"/>
    <property type="match status" value="1"/>
</dbReference>
<dbReference type="Pfam" id="PF21239">
    <property type="entry name" value="RLMM_N"/>
    <property type="match status" value="1"/>
</dbReference>
<dbReference type="PIRSF" id="PIRSF028774">
    <property type="entry name" value="UCP028774"/>
    <property type="match status" value="1"/>
</dbReference>
<dbReference type="SUPFAM" id="SSF53335">
    <property type="entry name" value="S-adenosyl-L-methionine-dependent methyltransferases"/>
    <property type="match status" value="1"/>
</dbReference>
<reference key="1">
    <citation type="submission" date="2009-06" db="EMBL/GenBank/DDBJ databases">
        <title>Complete sequence of Dickeya dadantii Ech703.</title>
        <authorList>
            <consortium name="US DOE Joint Genome Institute"/>
            <person name="Lucas S."/>
            <person name="Copeland A."/>
            <person name="Lapidus A."/>
            <person name="Glavina del Rio T."/>
            <person name="Dalin E."/>
            <person name="Tice H."/>
            <person name="Bruce D."/>
            <person name="Goodwin L."/>
            <person name="Pitluck S."/>
            <person name="Chertkov O."/>
            <person name="Brettin T."/>
            <person name="Detter J.C."/>
            <person name="Han C."/>
            <person name="Larimer F."/>
            <person name="Land M."/>
            <person name="Hauser L."/>
            <person name="Kyrpides N."/>
            <person name="Mikhailova N."/>
            <person name="Balakrishnan V."/>
            <person name="Glasner J."/>
            <person name="Perna N.T."/>
        </authorList>
    </citation>
    <scope>NUCLEOTIDE SEQUENCE [LARGE SCALE GENOMIC DNA]</scope>
    <source>
        <strain>Ech703</strain>
    </source>
</reference>
<sequence length="366" mass="42261">MNKVILYCRPGFEKECAAEITDKAGRRDIYGFVRVKDNSGYVIFECYQHEDADRLVRELPFRDLIFARQMMVCGELLRDLPPEDRITPIVGMLTGVVERAGELRVEVPDTNECKELMKFCRKFTVPLRTALRNDKILQAQEKPNRPVVHVLFIAPGCCYVGYSYSNNHSPFYMGIPRLKFPSDAPSRSTLKLEEAFHVFIPADEWDERLGSGMYAVDLGACPGGWTYQLVKRSMMVHAVDNGMMAQSLMDTGQVIHHQADGFRFEPPRNNIYWLVCDMVEKPAKVTSRMADWLVNGWCREAIFNLKLPMKKRYEEVALNLEKLTQRLQEGGINAEIHAKQLYHDREEVTVHVRRIWSAIPGRRDER</sequence>
<accession>C6CC07</accession>
<keyword id="KW-0963">Cytoplasm</keyword>
<keyword id="KW-0489">Methyltransferase</keyword>
<keyword id="KW-0698">rRNA processing</keyword>
<keyword id="KW-0949">S-adenosyl-L-methionine</keyword>
<keyword id="KW-0808">Transferase</keyword>
<comment type="function">
    <text evidence="1">Catalyzes the 2'-O-methylation at nucleotide C2498 in 23S rRNA.</text>
</comment>
<comment type="catalytic activity">
    <reaction evidence="1">
        <text>cytidine(2498) in 23S rRNA + S-adenosyl-L-methionine = 2'-O-methylcytidine(2498) in 23S rRNA + S-adenosyl-L-homocysteine + H(+)</text>
        <dbReference type="Rhea" id="RHEA:42788"/>
        <dbReference type="Rhea" id="RHEA-COMP:10244"/>
        <dbReference type="Rhea" id="RHEA-COMP:10245"/>
        <dbReference type="ChEBI" id="CHEBI:15378"/>
        <dbReference type="ChEBI" id="CHEBI:57856"/>
        <dbReference type="ChEBI" id="CHEBI:59789"/>
        <dbReference type="ChEBI" id="CHEBI:74495"/>
        <dbReference type="ChEBI" id="CHEBI:82748"/>
        <dbReference type="EC" id="2.1.1.186"/>
    </reaction>
</comment>
<comment type="subunit">
    <text evidence="1">Monomer.</text>
</comment>
<comment type="subcellular location">
    <subcellularLocation>
        <location evidence="1">Cytoplasm</location>
    </subcellularLocation>
</comment>
<comment type="similarity">
    <text evidence="1">Belongs to the class I-like SAM-binding methyltransferase superfamily. RNA methyltransferase RlmE family. RlmM subfamily.</text>
</comment>
<name>RLMM_MUSP7</name>
<gene>
    <name evidence="1" type="primary">rlmM</name>
    <name type="ordered locus">Dd703_2992</name>
</gene>
<evidence type="ECO:0000255" key="1">
    <source>
        <dbReference type="HAMAP-Rule" id="MF_01551"/>
    </source>
</evidence>
<feature type="chain" id="PRO_0000388980" description="Ribosomal RNA large subunit methyltransferase M">
    <location>
        <begin position="1"/>
        <end position="366"/>
    </location>
</feature>
<feature type="active site" description="Proton acceptor" evidence="1">
    <location>
        <position position="306"/>
    </location>
</feature>
<feature type="binding site" evidence="1">
    <location>
        <position position="188"/>
    </location>
    <ligand>
        <name>S-adenosyl-L-methionine</name>
        <dbReference type="ChEBI" id="CHEBI:59789"/>
    </ligand>
</feature>
<feature type="binding site" evidence="1">
    <location>
        <begin position="221"/>
        <end position="224"/>
    </location>
    <ligand>
        <name>S-adenosyl-L-methionine</name>
        <dbReference type="ChEBI" id="CHEBI:59789"/>
    </ligand>
</feature>
<feature type="binding site" evidence="1">
    <location>
        <position position="240"/>
    </location>
    <ligand>
        <name>S-adenosyl-L-methionine</name>
        <dbReference type="ChEBI" id="CHEBI:59789"/>
    </ligand>
</feature>
<feature type="binding site" evidence="1">
    <location>
        <position position="260"/>
    </location>
    <ligand>
        <name>S-adenosyl-L-methionine</name>
        <dbReference type="ChEBI" id="CHEBI:59789"/>
    </ligand>
</feature>
<feature type="binding site" evidence="1">
    <location>
        <position position="277"/>
    </location>
    <ligand>
        <name>S-adenosyl-L-methionine</name>
        <dbReference type="ChEBI" id="CHEBI:59789"/>
    </ligand>
</feature>
<protein>
    <recommendedName>
        <fullName evidence="1">Ribosomal RNA large subunit methyltransferase M</fullName>
        <ecNumber evidence="1">2.1.1.186</ecNumber>
    </recommendedName>
    <alternativeName>
        <fullName evidence="1">23S rRNA (cytidine2498-2'-O)-methyltransferase</fullName>
    </alternativeName>
    <alternativeName>
        <fullName evidence="1">23S rRNA 2'-O-ribose methyltransferase RlmM</fullName>
    </alternativeName>
</protein>